<gene>
    <name evidence="1" type="primary">aroC</name>
    <name type="ordered locus">Moth_1557</name>
</gene>
<sequence>MLRYLTAGESHGRGLSVIVEGLPAGVPLTDGDINTWLTRRQGGYGRGGRMAIERDQAEILAGVRGGLTLGSPIALFIANRDWENWQEIMAPGPEARAARVVTRPRPGHADLAGGLKYHQADLRNILERASARETAARVAAGAVAAVLLKELAIELAFHVVRIGPVEVREQVDWEAACRAVESPVYCADPEAGRAMVAAIEEARQQGDTLGGVVEVLARGVPAGLGSHVHWDRRLDGRLAQALMSIPAIKGVEIGAGFRVAALPGSRAHDAIAYRKGQGFYHPTNRAGGLEGGLTNGETLVLRAAMKPIPTLMHPLPSVDLVTKQPATASIERSDVCAVPAAAVVAAAAVAWVLAGAILEQFGGDYLPVIQERLAAYRQYLQEI</sequence>
<name>AROC_MOOTA</name>
<organism>
    <name type="scientific">Moorella thermoacetica (strain ATCC 39073 / JCM 9320)</name>
    <dbReference type="NCBI Taxonomy" id="264732"/>
    <lineage>
        <taxon>Bacteria</taxon>
        <taxon>Bacillati</taxon>
        <taxon>Bacillota</taxon>
        <taxon>Clostridia</taxon>
        <taxon>Moorellales</taxon>
        <taxon>Moorellaceae</taxon>
        <taxon>Moorella</taxon>
    </lineage>
</organism>
<feature type="chain" id="PRO_0000256303" description="Chorismate synthase">
    <location>
        <begin position="1"/>
        <end position="383"/>
    </location>
</feature>
<feature type="binding site" evidence="1">
    <location>
        <position position="40"/>
    </location>
    <ligand>
        <name>NADP(+)</name>
        <dbReference type="ChEBI" id="CHEBI:58349"/>
    </ligand>
</feature>
<feature type="binding site" evidence="1">
    <location>
        <position position="46"/>
    </location>
    <ligand>
        <name>NADP(+)</name>
        <dbReference type="ChEBI" id="CHEBI:58349"/>
    </ligand>
</feature>
<feature type="binding site" evidence="1">
    <location>
        <begin position="128"/>
        <end position="130"/>
    </location>
    <ligand>
        <name>FMN</name>
        <dbReference type="ChEBI" id="CHEBI:58210"/>
    </ligand>
</feature>
<feature type="binding site" evidence="1">
    <location>
        <position position="291"/>
    </location>
    <ligand>
        <name>FMN</name>
        <dbReference type="ChEBI" id="CHEBI:58210"/>
    </ligand>
</feature>
<feature type="binding site" evidence="1">
    <location>
        <begin position="306"/>
        <end position="310"/>
    </location>
    <ligand>
        <name>FMN</name>
        <dbReference type="ChEBI" id="CHEBI:58210"/>
    </ligand>
</feature>
<feature type="binding site" evidence="1">
    <location>
        <position position="332"/>
    </location>
    <ligand>
        <name>FMN</name>
        <dbReference type="ChEBI" id="CHEBI:58210"/>
    </ligand>
</feature>
<protein>
    <recommendedName>
        <fullName evidence="1">Chorismate synthase</fullName>
        <shortName evidence="1">CS</shortName>
        <ecNumber evidence="1">4.2.3.5</ecNumber>
    </recommendedName>
    <alternativeName>
        <fullName evidence="1">5-enolpyruvylshikimate-3-phosphate phospholyase</fullName>
    </alternativeName>
</protein>
<evidence type="ECO:0000255" key="1">
    <source>
        <dbReference type="HAMAP-Rule" id="MF_00300"/>
    </source>
</evidence>
<proteinExistence type="inferred from homology"/>
<accession>Q2RI73</accession>
<dbReference type="EC" id="4.2.3.5" evidence="1"/>
<dbReference type="EMBL" id="CP000232">
    <property type="protein sequence ID" value="ABC19866.1"/>
    <property type="molecule type" value="Genomic_DNA"/>
</dbReference>
<dbReference type="RefSeq" id="YP_430409.1">
    <property type="nucleotide sequence ID" value="NC_007644.1"/>
</dbReference>
<dbReference type="SMR" id="Q2RI73"/>
<dbReference type="STRING" id="264732.Moth_1557"/>
<dbReference type="EnsemblBacteria" id="ABC19866">
    <property type="protein sequence ID" value="ABC19866"/>
    <property type="gene ID" value="Moth_1557"/>
</dbReference>
<dbReference type="KEGG" id="mta:Moth_1557"/>
<dbReference type="PATRIC" id="fig|264732.11.peg.1684"/>
<dbReference type="eggNOG" id="COG0082">
    <property type="taxonomic scope" value="Bacteria"/>
</dbReference>
<dbReference type="HOGENOM" id="CLU_034547_2_0_9"/>
<dbReference type="OrthoDB" id="9771806at2"/>
<dbReference type="UniPathway" id="UPA00053">
    <property type="reaction ID" value="UER00090"/>
</dbReference>
<dbReference type="GO" id="GO:0005829">
    <property type="term" value="C:cytosol"/>
    <property type="evidence" value="ECO:0007669"/>
    <property type="project" value="TreeGrafter"/>
</dbReference>
<dbReference type="GO" id="GO:0004107">
    <property type="term" value="F:chorismate synthase activity"/>
    <property type="evidence" value="ECO:0007669"/>
    <property type="project" value="UniProtKB-UniRule"/>
</dbReference>
<dbReference type="GO" id="GO:0010181">
    <property type="term" value="F:FMN binding"/>
    <property type="evidence" value="ECO:0007669"/>
    <property type="project" value="TreeGrafter"/>
</dbReference>
<dbReference type="GO" id="GO:0008652">
    <property type="term" value="P:amino acid biosynthetic process"/>
    <property type="evidence" value="ECO:0007669"/>
    <property type="project" value="UniProtKB-KW"/>
</dbReference>
<dbReference type="GO" id="GO:0009073">
    <property type="term" value="P:aromatic amino acid family biosynthetic process"/>
    <property type="evidence" value="ECO:0007669"/>
    <property type="project" value="UniProtKB-KW"/>
</dbReference>
<dbReference type="GO" id="GO:0009423">
    <property type="term" value="P:chorismate biosynthetic process"/>
    <property type="evidence" value="ECO:0007669"/>
    <property type="project" value="UniProtKB-UniRule"/>
</dbReference>
<dbReference type="CDD" id="cd07304">
    <property type="entry name" value="Chorismate_synthase"/>
    <property type="match status" value="1"/>
</dbReference>
<dbReference type="FunFam" id="3.60.150.10:FF:000002">
    <property type="entry name" value="Chorismate synthase"/>
    <property type="match status" value="1"/>
</dbReference>
<dbReference type="Gene3D" id="3.60.150.10">
    <property type="entry name" value="Chorismate synthase AroC"/>
    <property type="match status" value="1"/>
</dbReference>
<dbReference type="HAMAP" id="MF_00300">
    <property type="entry name" value="Chorismate_synth"/>
    <property type="match status" value="1"/>
</dbReference>
<dbReference type="InterPro" id="IPR000453">
    <property type="entry name" value="Chorismate_synth"/>
</dbReference>
<dbReference type="InterPro" id="IPR035904">
    <property type="entry name" value="Chorismate_synth_AroC_sf"/>
</dbReference>
<dbReference type="InterPro" id="IPR020541">
    <property type="entry name" value="Chorismate_synthase_CS"/>
</dbReference>
<dbReference type="NCBIfam" id="TIGR00033">
    <property type="entry name" value="aroC"/>
    <property type="match status" value="1"/>
</dbReference>
<dbReference type="NCBIfam" id="NF003793">
    <property type="entry name" value="PRK05382.1"/>
    <property type="match status" value="1"/>
</dbReference>
<dbReference type="PANTHER" id="PTHR21085">
    <property type="entry name" value="CHORISMATE SYNTHASE"/>
    <property type="match status" value="1"/>
</dbReference>
<dbReference type="PANTHER" id="PTHR21085:SF0">
    <property type="entry name" value="CHORISMATE SYNTHASE"/>
    <property type="match status" value="1"/>
</dbReference>
<dbReference type="Pfam" id="PF01264">
    <property type="entry name" value="Chorismate_synt"/>
    <property type="match status" value="1"/>
</dbReference>
<dbReference type="PIRSF" id="PIRSF001456">
    <property type="entry name" value="Chorismate_synth"/>
    <property type="match status" value="1"/>
</dbReference>
<dbReference type="SUPFAM" id="SSF103263">
    <property type="entry name" value="Chorismate synthase, AroC"/>
    <property type="match status" value="1"/>
</dbReference>
<dbReference type="PROSITE" id="PS00787">
    <property type="entry name" value="CHORISMATE_SYNTHASE_1"/>
    <property type="match status" value="1"/>
</dbReference>
<dbReference type="PROSITE" id="PS00788">
    <property type="entry name" value="CHORISMATE_SYNTHASE_2"/>
    <property type="match status" value="1"/>
</dbReference>
<keyword id="KW-0028">Amino-acid biosynthesis</keyword>
<keyword id="KW-0057">Aromatic amino acid biosynthesis</keyword>
<keyword id="KW-0274">FAD</keyword>
<keyword id="KW-0285">Flavoprotein</keyword>
<keyword id="KW-0288">FMN</keyword>
<keyword id="KW-0456">Lyase</keyword>
<keyword id="KW-0521">NADP</keyword>
<comment type="function">
    <text evidence="1">Catalyzes the anti-1,4-elimination of the C-3 phosphate and the C-6 proR hydrogen from 5-enolpyruvylshikimate-3-phosphate (EPSP) to yield chorismate, which is the branch point compound that serves as the starting substrate for the three terminal pathways of aromatic amino acid biosynthesis. This reaction introduces a second double bond into the aromatic ring system.</text>
</comment>
<comment type="catalytic activity">
    <reaction evidence="1">
        <text>5-O-(1-carboxyvinyl)-3-phosphoshikimate = chorismate + phosphate</text>
        <dbReference type="Rhea" id="RHEA:21020"/>
        <dbReference type="ChEBI" id="CHEBI:29748"/>
        <dbReference type="ChEBI" id="CHEBI:43474"/>
        <dbReference type="ChEBI" id="CHEBI:57701"/>
        <dbReference type="EC" id="4.2.3.5"/>
    </reaction>
</comment>
<comment type="cofactor">
    <cofactor evidence="1">
        <name>FMNH2</name>
        <dbReference type="ChEBI" id="CHEBI:57618"/>
    </cofactor>
    <text evidence="1">Reduced FMN (FMNH(2)).</text>
</comment>
<comment type="pathway">
    <text evidence="1">Metabolic intermediate biosynthesis; chorismate biosynthesis; chorismate from D-erythrose 4-phosphate and phosphoenolpyruvate: step 7/7.</text>
</comment>
<comment type="subunit">
    <text evidence="1">Homotetramer.</text>
</comment>
<comment type="similarity">
    <text evidence="1">Belongs to the chorismate synthase family.</text>
</comment>
<reference key="1">
    <citation type="journal article" date="2008" name="Environ. Microbiol.">
        <title>The complete genome sequence of Moorella thermoacetica (f. Clostridium thermoaceticum).</title>
        <authorList>
            <person name="Pierce E."/>
            <person name="Xie G."/>
            <person name="Barabote R.D."/>
            <person name="Saunders E."/>
            <person name="Han C.S."/>
            <person name="Detter J.C."/>
            <person name="Richardson P."/>
            <person name="Brettin T.S."/>
            <person name="Das A."/>
            <person name="Ljungdahl L.G."/>
            <person name="Ragsdale S.W."/>
        </authorList>
    </citation>
    <scope>NUCLEOTIDE SEQUENCE [LARGE SCALE GENOMIC DNA]</scope>
    <source>
        <strain>ATCC 39073 / JCM 9320</strain>
    </source>
</reference>